<proteinExistence type="evidence at transcript level"/>
<name>RAB1A_PIG</name>
<sequence length="205" mass="22606">MSSMNPEYDYLFKLLLIGDSGVGKSCLLLRFADDTYTESYISTIGVDFKIRTIELDGKTIKLQIWDTAGQERFRTITSSYYRGAHGIIVVYDVTDQGSFNNVKQWLQEIDRYASENVNKLLVGNKCDLTTKKVVDYTTAKEFADSLGIPFLETSAKNATNVEQSFMTMAAEIKKRMGPGATAGGAEKSNVKIQSTPVKQSGGGCC</sequence>
<protein>
    <recommendedName>
        <fullName>Ras-related protein Rab-1A</fullName>
        <ecNumber evidence="2">3.6.5.2</ecNumber>
    </recommendedName>
</protein>
<keyword id="KW-0007">Acetylation</keyword>
<keyword id="KW-0072">Autophagy</keyword>
<keyword id="KW-0963">Cytoplasm</keyword>
<keyword id="KW-0256">Endoplasmic reticulum</keyword>
<keyword id="KW-0967">Endosome</keyword>
<keyword id="KW-0931">ER-Golgi transport</keyword>
<keyword id="KW-0333">Golgi apparatus</keyword>
<keyword id="KW-0342">GTP-binding</keyword>
<keyword id="KW-0378">Hydrolase</keyword>
<keyword id="KW-1017">Isopeptide bond</keyword>
<keyword id="KW-0449">Lipoprotein</keyword>
<keyword id="KW-0460">Magnesium</keyword>
<keyword id="KW-0472">Membrane</keyword>
<keyword id="KW-0479">Metal-binding</keyword>
<keyword id="KW-0547">Nucleotide-binding</keyword>
<keyword id="KW-0597">Phosphoprotein</keyword>
<keyword id="KW-0636">Prenylation</keyword>
<keyword id="KW-0653">Protein transport</keyword>
<keyword id="KW-1185">Reference proteome</keyword>
<keyword id="KW-0813">Transport</keyword>
<keyword id="KW-0832">Ubl conjugation</keyword>
<evidence type="ECO:0000250" key="1">
    <source>
        <dbReference type="UniProtKB" id="P51153"/>
    </source>
</evidence>
<evidence type="ECO:0000250" key="2">
    <source>
        <dbReference type="UniProtKB" id="P62820"/>
    </source>
</evidence>
<evidence type="ECO:0000250" key="3">
    <source>
        <dbReference type="UniProtKB" id="P62821"/>
    </source>
</evidence>
<evidence type="ECO:0000250" key="4">
    <source>
        <dbReference type="UniProtKB" id="P62822"/>
    </source>
</evidence>
<evidence type="ECO:0000256" key="5">
    <source>
        <dbReference type="SAM" id="MobiDB-lite"/>
    </source>
</evidence>
<evidence type="ECO:0000305" key="6"/>
<organism>
    <name type="scientific">Sus scrofa</name>
    <name type="common">Pig</name>
    <dbReference type="NCBI Taxonomy" id="9823"/>
    <lineage>
        <taxon>Eukaryota</taxon>
        <taxon>Metazoa</taxon>
        <taxon>Chordata</taxon>
        <taxon>Craniata</taxon>
        <taxon>Vertebrata</taxon>
        <taxon>Euteleostomi</taxon>
        <taxon>Mammalia</taxon>
        <taxon>Eutheria</taxon>
        <taxon>Laurasiatheria</taxon>
        <taxon>Artiodactyla</taxon>
        <taxon>Suina</taxon>
        <taxon>Suidae</taxon>
        <taxon>Sus</taxon>
    </lineage>
</organism>
<reference key="1">
    <citation type="submission" date="2005-04" db="EMBL/GenBank/DDBJ databases">
        <authorList>
            <person name="Liu G.Y."/>
            <person name="Xiong Z.Y."/>
        </authorList>
    </citation>
    <scope>NUCLEOTIDE SEQUENCE [LARGE SCALE MRNA]</scope>
</reference>
<gene>
    <name type="primary">RAB1A</name>
</gene>
<feature type="initiator methionine" description="Removed" evidence="2">
    <location>
        <position position="1"/>
    </location>
</feature>
<feature type="chain" id="PRO_0000121058" description="Ras-related protein Rab-1A">
    <location>
        <begin position="2"/>
        <end position="205"/>
    </location>
</feature>
<feature type="region of interest" description="Disordered" evidence="5">
    <location>
        <begin position="178"/>
        <end position="205"/>
    </location>
</feature>
<feature type="short sequence motif" description="Switch 1" evidence="2">
    <location>
        <begin position="34"/>
        <end position="48"/>
    </location>
</feature>
<feature type="short sequence motif" description="Switch 2" evidence="2">
    <location>
        <begin position="66"/>
        <end position="83"/>
    </location>
</feature>
<feature type="binding site" evidence="2">
    <location>
        <position position="20"/>
    </location>
    <ligand>
        <name>GTP</name>
        <dbReference type="ChEBI" id="CHEBI:37565"/>
    </ligand>
</feature>
<feature type="binding site" evidence="2">
    <location>
        <position position="21"/>
    </location>
    <ligand>
        <name>GTP</name>
        <dbReference type="ChEBI" id="CHEBI:37565"/>
    </ligand>
</feature>
<feature type="binding site" evidence="2">
    <location>
        <position position="23"/>
    </location>
    <ligand>
        <name>GTP</name>
        <dbReference type="ChEBI" id="CHEBI:37565"/>
    </ligand>
</feature>
<feature type="binding site" evidence="2">
    <location>
        <position position="24"/>
    </location>
    <ligand>
        <name>GTP</name>
        <dbReference type="ChEBI" id="CHEBI:37565"/>
    </ligand>
</feature>
<feature type="binding site" evidence="2">
    <location>
        <position position="25"/>
    </location>
    <ligand>
        <name>GTP</name>
        <dbReference type="ChEBI" id="CHEBI:37565"/>
    </ligand>
</feature>
<feature type="binding site" evidence="2">
    <location>
        <position position="25"/>
    </location>
    <ligand>
        <name>Mg(2+)</name>
        <dbReference type="ChEBI" id="CHEBI:18420"/>
    </ligand>
</feature>
<feature type="binding site" evidence="2">
    <location>
        <position position="26"/>
    </location>
    <ligand>
        <name>GTP</name>
        <dbReference type="ChEBI" id="CHEBI:37565"/>
    </ligand>
</feature>
<feature type="binding site" evidence="2">
    <location>
        <position position="38"/>
    </location>
    <ligand>
        <name>GTP</name>
        <dbReference type="ChEBI" id="CHEBI:37565"/>
    </ligand>
</feature>
<feature type="binding site" evidence="2">
    <location>
        <position position="43"/>
    </location>
    <ligand>
        <name>GTP</name>
        <dbReference type="ChEBI" id="CHEBI:37565"/>
    </ligand>
</feature>
<feature type="binding site" evidence="2">
    <location>
        <position position="43"/>
    </location>
    <ligand>
        <name>Mg(2+)</name>
        <dbReference type="ChEBI" id="CHEBI:18420"/>
    </ligand>
</feature>
<feature type="binding site" evidence="2">
    <location>
        <position position="66"/>
    </location>
    <ligand>
        <name>Mg(2+)</name>
        <dbReference type="ChEBI" id="CHEBI:18420"/>
    </ligand>
</feature>
<feature type="binding site" evidence="2">
    <location>
        <position position="69"/>
    </location>
    <ligand>
        <name>GTP</name>
        <dbReference type="ChEBI" id="CHEBI:37565"/>
    </ligand>
</feature>
<feature type="binding site" evidence="2">
    <location>
        <position position="124"/>
    </location>
    <ligand>
        <name>GTP</name>
        <dbReference type="ChEBI" id="CHEBI:37565"/>
    </ligand>
</feature>
<feature type="binding site" evidence="2">
    <location>
        <position position="125"/>
    </location>
    <ligand>
        <name>GTP</name>
        <dbReference type="ChEBI" id="CHEBI:37565"/>
    </ligand>
</feature>
<feature type="binding site" evidence="2">
    <location>
        <position position="127"/>
    </location>
    <ligand>
        <name>GTP</name>
        <dbReference type="ChEBI" id="CHEBI:37565"/>
    </ligand>
</feature>
<feature type="binding site" evidence="2">
    <location>
        <position position="155"/>
    </location>
    <ligand>
        <name>GTP</name>
        <dbReference type="ChEBI" id="CHEBI:37565"/>
    </ligand>
</feature>
<feature type="binding site" evidence="2">
    <location>
        <position position="156"/>
    </location>
    <ligand>
        <name>GTP</name>
        <dbReference type="ChEBI" id="CHEBI:37565"/>
    </ligand>
</feature>
<feature type="modified residue" description="N-acetylserine" evidence="2">
    <location>
        <position position="2"/>
    </location>
</feature>
<feature type="modified residue" description="Phosphoserine; by CDK1" evidence="2">
    <location>
        <position position="194"/>
    </location>
</feature>
<feature type="lipid moiety-binding region" description="S-geranylgeranyl cysteine" evidence="2">
    <location>
        <position position="204"/>
    </location>
</feature>
<feature type="lipid moiety-binding region" description="S-geranylgeranyl cysteine" evidence="2">
    <location>
        <position position="205"/>
    </location>
</feature>
<feature type="cross-link" description="Glycyl lysine isopeptide (Lys-Gly) (interchain with G-Cter in ubiquitin)" evidence="1">
    <location>
        <position position="49"/>
    </location>
</feature>
<feature type="cross-link" description="Glycyl lysine isopeptide (Lys-Gly) (interchain with G-Cter in ubiquitin)" evidence="1">
    <location>
        <position position="61"/>
    </location>
</feature>
<accession>Q52NJ2</accession>
<dbReference type="EC" id="3.6.5.2" evidence="2"/>
<dbReference type="EMBL" id="AY996813">
    <property type="protein sequence ID" value="AAY17509.1"/>
    <property type="molecule type" value="mRNA"/>
</dbReference>
<dbReference type="RefSeq" id="NP_001026957.1">
    <property type="nucleotide sequence ID" value="NM_001031787.1"/>
</dbReference>
<dbReference type="SMR" id="Q52NJ2"/>
<dbReference type="FunCoup" id="Q52NJ2">
    <property type="interactions" value="2544"/>
</dbReference>
<dbReference type="STRING" id="9823.ENSSSCP00000059996"/>
<dbReference type="PaxDb" id="9823-ENSSSCP00000008922"/>
<dbReference type="PeptideAtlas" id="Q52NJ2"/>
<dbReference type="GeneID" id="595116"/>
<dbReference type="KEGG" id="ssc:595116"/>
<dbReference type="CTD" id="5861"/>
<dbReference type="eggNOG" id="KOG0084">
    <property type="taxonomic scope" value="Eukaryota"/>
</dbReference>
<dbReference type="InParanoid" id="Q52NJ2"/>
<dbReference type="OrthoDB" id="9989112at2759"/>
<dbReference type="Proteomes" id="UP000008227">
    <property type="component" value="Unplaced"/>
</dbReference>
<dbReference type="Proteomes" id="UP000314985">
    <property type="component" value="Unplaced"/>
</dbReference>
<dbReference type="Proteomes" id="UP000694570">
    <property type="component" value="Unplaced"/>
</dbReference>
<dbReference type="Proteomes" id="UP000694571">
    <property type="component" value="Unplaced"/>
</dbReference>
<dbReference type="Proteomes" id="UP000694720">
    <property type="component" value="Unplaced"/>
</dbReference>
<dbReference type="Proteomes" id="UP000694722">
    <property type="component" value="Unplaced"/>
</dbReference>
<dbReference type="Proteomes" id="UP000694723">
    <property type="component" value="Unplaced"/>
</dbReference>
<dbReference type="Proteomes" id="UP000694724">
    <property type="component" value="Unplaced"/>
</dbReference>
<dbReference type="Proteomes" id="UP000694725">
    <property type="component" value="Unplaced"/>
</dbReference>
<dbReference type="Proteomes" id="UP000694726">
    <property type="component" value="Unplaced"/>
</dbReference>
<dbReference type="Proteomes" id="UP000694727">
    <property type="component" value="Unplaced"/>
</dbReference>
<dbReference type="Proteomes" id="UP000694728">
    <property type="component" value="Unplaced"/>
</dbReference>
<dbReference type="GO" id="GO:0005829">
    <property type="term" value="C:cytosol"/>
    <property type="evidence" value="ECO:0007669"/>
    <property type="project" value="UniProtKB-SubCell"/>
</dbReference>
<dbReference type="GO" id="GO:0005769">
    <property type="term" value="C:early endosome"/>
    <property type="evidence" value="ECO:0007669"/>
    <property type="project" value="UniProtKB-SubCell"/>
</dbReference>
<dbReference type="GO" id="GO:0012505">
    <property type="term" value="C:endomembrane system"/>
    <property type="evidence" value="ECO:0000318"/>
    <property type="project" value="GO_Central"/>
</dbReference>
<dbReference type="GO" id="GO:0005783">
    <property type="term" value="C:endoplasmic reticulum"/>
    <property type="evidence" value="ECO:0007669"/>
    <property type="project" value="UniProtKB-SubCell"/>
</dbReference>
<dbReference type="GO" id="GO:0005794">
    <property type="term" value="C:Golgi apparatus"/>
    <property type="evidence" value="ECO:0007669"/>
    <property type="project" value="UniProtKB-SubCell"/>
</dbReference>
<dbReference type="GO" id="GO:0042470">
    <property type="term" value="C:melanosome"/>
    <property type="evidence" value="ECO:0007669"/>
    <property type="project" value="UniProtKB-SubCell"/>
</dbReference>
<dbReference type="GO" id="GO:0016020">
    <property type="term" value="C:membrane"/>
    <property type="evidence" value="ECO:0007669"/>
    <property type="project" value="UniProtKB-SubCell"/>
</dbReference>
<dbReference type="GO" id="GO:0003925">
    <property type="term" value="F:G protein activity"/>
    <property type="evidence" value="ECO:0007669"/>
    <property type="project" value="UniProtKB-EC"/>
</dbReference>
<dbReference type="GO" id="GO:0005525">
    <property type="term" value="F:GTP binding"/>
    <property type="evidence" value="ECO:0007669"/>
    <property type="project" value="UniProtKB-KW"/>
</dbReference>
<dbReference type="GO" id="GO:0003924">
    <property type="term" value="F:GTPase activity"/>
    <property type="evidence" value="ECO:0000250"/>
    <property type="project" value="UniProtKB"/>
</dbReference>
<dbReference type="GO" id="GO:0000045">
    <property type="term" value="P:autophagosome assembly"/>
    <property type="evidence" value="ECO:0000250"/>
    <property type="project" value="UniProtKB"/>
</dbReference>
<dbReference type="GO" id="GO:0006914">
    <property type="term" value="P:autophagy"/>
    <property type="evidence" value="ECO:0000250"/>
    <property type="project" value="UniProtKB"/>
</dbReference>
<dbReference type="GO" id="GO:0016477">
    <property type="term" value="P:cell migration"/>
    <property type="evidence" value="ECO:0000250"/>
    <property type="project" value="UniProtKB"/>
</dbReference>
<dbReference type="GO" id="GO:0042742">
    <property type="term" value="P:defense response to bacterium"/>
    <property type="evidence" value="ECO:0000250"/>
    <property type="project" value="UniProtKB"/>
</dbReference>
<dbReference type="GO" id="GO:0006897">
    <property type="term" value="P:endocytosis"/>
    <property type="evidence" value="ECO:0000250"/>
    <property type="project" value="UniProtKB"/>
</dbReference>
<dbReference type="GO" id="GO:0006888">
    <property type="term" value="P:endoplasmic reticulum to Golgi vesicle-mediated transport"/>
    <property type="evidence" value="ECO:0000250"/>
    <property type="project" value="UniProtKB"/>
</dbReference>
<dbReference type="GO" id="GO:0007030">
    <property type="term" value="P:Golgi organization"/>
    <property type="evidence" value="ECO:0000250"/>
    <property type="project" value="UniProtKB"/>
</dbReference>
<dbReference type="GO" id="GO:0030252">
    <property type="term" value="P:growth hormone secretion"/>
    <property type="evidence" value="ECO:0000250"/>
    <property type="project" value="UniProtKB"/>
</dbReference>
<dbReference type="GO" id="GO:0006886">
    <property type="term" value="P:intracellular protein transport"/>
    <property type="evidence" value="ECO:0000318"/>
    <property type="project" value="GO_Central"/>
</dbReference>
<dbReference type="GO" id="GO:0032757">
    <property type="term" value="P:positive regulation of interleukin-8 production"/>
    <property type="evidence" value="ECO:0000250"/>
    <property type="project" value="UniProtKB"/>
</dbReference>
<dbReference type="GO" id="GO:0047496">
    <property type="term" value="P:vesicle transport along microtubule"/>
    <property type="evidence" value="ECO:0000250"/>
    <property type="project" value="UniProtKB"/>
</dbReference>
<dbReference type="CDD" id="cd01869">
    <property type="entry name" value="Rab1_Ypt1"/>
    <property type="match status" value="1"/>
</dbReference>
<dbReference type="FunFam" id="3.40.50.300:FF:000069">
    <property type="entry name" value="Ras GTP-binding protein YPT1"/>
    <property type="match status" value="1"/>
</dbReference>
<dbReference type="Gene3D" id="3.40.50.300">
    <property type="entry name" value="P-loop containing nucleotide triphosphate hydrolases"/>
    <property type="match status" value="1"/>
</dbReference>
<dbReference type="InterPro" id="IPR027417">
    <property type="entry name" value="P-loop_NTPase"/>
</dbReference>
<dbReference type="InterPro" id="IPR050227">
    <property type="entry name" value="Rab"/>
</dbReference>
<dbReference type="InterPro" id="IPR005225">
    <property type="entry name" value="Small_GTP-bd"/>
</dbReference>
<dbReference type="InterPro" id="IPR001806">
    <property type="entry name" value="Small_GTPase"/>
</dbReference>
<dbReference type="NCBIfam" id="TIGR00231">
    <property type="entry name" value="small_GTP"/>
    <property type="match status" value="1"/>
</dbReference>
<dbReference type="PANTHER" id="PTHR47977">
    <property type="entry name" value="RAS-RELATED PROTEIN RAB"/>
    <property type="match status" value="1"/>
</dbReference>
<dbReference type="Pfam" id="PF00071">
    <property type="entry name" value="Ras"/>
    <property type="match status" value="1"/>
</dbReference>
<dbReference type="PRINTS" id="PR00449">
    <property type="entry name" value="RASTRNSFRMNG"/>
</dbReference>
<dbReference type="SMART" id="SM00177">
    <property type="entry name" value="ARF"/>
    <property type="match status" value="1"/>
</dbReference>
<dbReference type="SMART" id="SM00175">
    <property type="entry name" value="RAB"/>
    <property type="match status" value="1"/>
</dbReference>
<dbReference type="SMART" id="SM00176">
    <property type="entry name" value="RAN"/>
    <property type="match status" value="1"/>
</dbReference>
<dbReference type="SMART" id="SM00173">
    <property type="entry name" value="RAS"/>
    <property type="match status" value="1"/>
</dbReference>
<dbReference type="SMART" id="SM00174">
    <property type="entry name" value="RHO"/>
    <property type="match status" value="1"/>
</dbReference>
<dbReference type="SUPFAM" id="SSF52540">
    <property type="entry name" value="P-loop containing nucleoside triphosphate hydrolases"/>
    <property type="match status" value="1"/>
</dbReference>
<dbReference type="PROSITE" id="PS51419">
    <property type="entry name" value="RAB"/>
    <property type="match status" value="1"/>
</dbReference>
<comment type="function">
    <text evidence="2 3">The small GTPases Rab are key regulators of intracellular membrane trafficking, from the formation of transport vesicles to their fusion with membranes. Rabs cycle between an inactive GDP-bound form and an active GTP-bound form that is able to recruit to membranes different sets of downstream effectors directly responsible for vesicle formation, movement, tethering and fusion. RAB1A regulates vesicular protein transport from the endoplasmic reticulum (ER) to the Golgi compartment and on to the cell surface, and plays a role in IL-8 and growth hormone secretion. Required to modulate the compacted morphology of the Golgi (By similarity). Regulates the level of CASR present at the cell membrane. Plays a role in cell adhesion and cell migration, via its role in protein trafficking. Plays a role in autophagosome assembly and cellular defense reactions against pathogenic bacteria (By similarity). Plays a role in microtubule-dependent protein transport by early endosomes and in anterograde melanosome transport (By similarity).</text>
</comment>
<comment type="catalytic activity">
    <reaction evidence="2">
        <text>GTP + H2O = GDP + phosphate + H(+)</text>
        <dbReference type="Rhea" id="RHEA:19669"/>
        <dbReference type="ChEBI" id="CHEBI:15377"/>
        <dbReference type="ChEBI" id="CHEBI:15378"/>
        <dbReference type="ChEBI" id="CHEBI:37565"/>
        <dbReference type="ChEBI" id="CHEBI:43474"/>
        <dbReference type="ChEBI" id="CHEBI:58189"/>
        <dbReference type="EC" id="3.6.5.2"/>
    </reaction>
    <physiologicalReaction direction="left-to-right" evidence="2">
        <dbReference type="Rhea" id="RHEA:19670"/>
    </physiologicalReaction>
</comment>
<comment type="cofactor">
    <cofactor evidence="2">
        <name>Mg(2+)</name>
        <dbReference type="ChEBI" id="CHEBI:18420"/>
    </cofactor>
</comment>
<comment type="activity regulation">
    <text evidence="2">Regulated by guanine nucleotide exchange factors (GEFs) which promote the exchange of bound GDP for free GTP. Regulated by GTPase activating proteins (GAPs) which increase the GTP hydrolysis activity. Inhibited by GDP dissociation inhibitors (GDIs).</text>
</comment>
<comment type="subunit">
    <text evidence="2 4">May interact with YIPF5. Interacts with C9orf72; the interaction mediates recruitment of RAB1A to the ATG1/ULK1 kinase complex. Interacts with GDI1; this promotes dissociation from membranes.</text>
</comment>
<comment type="subcellular location">
    <subcellularLocation>
        <location evidence="2">Golgi apparatus</location>
    </subcellularLocation>
    <subcellularLocation>
        <location evidence="2">Endoplasmic reticulum</location>
    </subcellularLocation>
    <subcellularLocation>
        <location evidence="2">Early endosome</location>
    </subcellularLocation>
    <subcellularLocation>
        <location evidence="2">Cytoplasm</location>
        <location evidence="2">Cytosol</location>
    </subcellularLocation>
    <subcellularLocation>
        <location evidence="2">Membrane</location>
    </subcellularLocation>
    <subcellularLocation>
        <location evidence="3">Melanosome</location>
    </subcellularLocation>
    <text evidence="2">Alternates between membrane-associated and cytosolic forms.</text>
</comment>
<comment type="domain">
    <text evidence="2">Switch 1, switch 2 and the interswitch regions are characteristic of Rab GTPases and mediate the interactions with Rab downstream effectors. The switch regions undergo conformational changes upon nucleotide binding which drive interaction with specific sets of effector proteins, with most effectors only binding to GTP-bound Rab.</text>
</comment>
<comment type="PTM">
    <text evidence="2">Phosphorylated by CDK1 kinase during mitosis.</text>
</comment>
<comment type="PTM">
    <text evidence="1">Ubiquitinated via 'Lys-11'-linked ubiquitination on Lys-49 and Lys-61; impairing the recruitment of guanosine diphosphate (GDP) dissociation inhibitor 1/GDI1.</text>
</comment>
<comment type="similarity">
    <text evidence="6">Belongs to the small GTPase superfamily. Rab family.</text>
</comment>